<keyword id="KW-0963">Cytoplasm</keyword>
<keyword id="KW-0690">Ribosome biogenesis</keyword>
<gene>
    <name evidence="1" type="primary">rbfA</name>
    <name type="ordered locus">SGR_1809</name>
</gene>
<feature type="chain" id="PRO_1000088934" description="Ribosome-binding factor A">
    <location>
        <begin position="1"/>
        <end position="158"/>
    </location>
</feature>
<feature type="region of interest" description="Disordered" evidence="2">
    <location>
        <begin position="114"/>
        <end position="158"/>
    </location>
</feature>
<feature type="compositionally biased region" description="Basic and acidic residues" evidence="2">
    <location>
        <begin position="148"/>
        <end position="158"/>
    </location>
</feature>
<name>RBFA_STRGG</name>
<organism>
    <name type="scientific">Streptomyces griseus subsp. griseus (strain JCM 4626 / CBS 651.72 / NBRC 13350 / KCC S-0626 / ISP 5235)</name>
    <dbReference type="NCBI Taxonomy" id="455632"/>
    <lineage>
        <taxon>Bacteria</taxon>
        <taxon>Bacillati</taxon>
        <taxon>Actinomycetota</taxon>
        <taxon>Actinomycetes</taxon>
        <taxon>Kitasatosporales</taxon>
        <taxon>Streptomycetaceae</taxon>
        <taxon>Streptomyces</taxon>
    </lineage>
</organism>
<sequence length="158" mass="17203">MTDNARARKLADRIQVVVAETLDRRIKDPRLGFVTITDARVTGDLREATVFYTVYGDDEERAASAAALESAKGVLRSEVGRQTGVRFTPTLAFVPDALPDNARTIEDLLDKARAKDAEVRQVSTGAQYAGDADPYRKPEDEDEETDGSSEKNEGPASA</sequence>
<comment type="function">
    <text evidence="1">One of several proteins that assist in the late maturation steps of the functional core of the 30S ribosomal subunit. Associates with free 30S ribosomal subunits (but not with 30S subunits that are part of 70S ribosomes or polysomes). Required for efficient processing of 16S rRNA. May interact with the 5'-terminal helix region of 16S rRNA.</text>
</comment>
<comment type="subunit">
    <text evidence="1">Monomer. Binds 30S ribosomal subunits, but not 50S ribosomal subunits or 70S ribosomes.</text>
</comment>
<comment type="subcellular location">
    <subcellularLocation>
        <location evidence="1">Cytoplasm</location>
    </subcellularLocation>
</comment>
<comment type="similarity">
    <text evidence="1">Belongs to the RbfA family.</text>
</comment>
<dbReference type="EMBL" id="AP009493">
    <property type="protein sequence ID" value="BAG18638.1"/>
    <property type="molecule type" value="Genomic_DNA"/>
</dbReference>
<dbReference type="RefSeq" id="WP_003965880.1">
    <property type="nucleotide sequence ID" value="NC_010572.1"/>
</dbReference>
<dbReference type="SMR" id="B1VYN3"/>
<dbReference type="KEGG" id="sgr:SGR_1809"/>
<dbReference type="eggNOG" id="COG0858">
    <property type="taxonomic scope" value="Bacteria"/>
</dbReference>
<dbReference type="HOGENOM" id="CLU_089475_0_0_11"/>
<dbReference type="Proteomes" id="UP000001685">
    <property type="component" value="Chromosome"/>
</dbReference>
<dbReference type="GO" id="GO:0005829">
    <property type="term" value="C:cytosol"/>
    <property type="evidence" value="ECO:0007669"/>
    <property type="project" value="TreeGrafter"/>
</dbReference>
<dbReference type="GO" id="GO:0043024">
    <property type="term" value="F:ribosomal small subunit binding"/>
    <property type="evidence" value="ECO:0007669"/>
    <property type="project" value="TreeGrafter"/>
</dbReference>
<dbReference type="GO" id="GO:0030490">
    <property type="term" value="P:maturation of SSU-rRNA"/>
    <property type="evidence" value="ECO:0007669"/>
    <property type="project" value="UniProtKB-UniRule"/>
</dbReference>
<dbReference type="FunFam" id="3.30.300.20:FF:000018">
    <property type="entry name" value="Ribosome-binding factor A"/>
    <property type="match status" value="1"/>
</dbReference>
<dbReference type="Gene3D" id="3.30.300.20">
    <property type="match status" value="1"/>
</dbReference>
<dbReference type="HAMAP" id="MF_00003">
    <property type="entry name" value="RbfA"/>
    <property type="match status" value="1"/>
</dbReference>
<dbReference type="InterPro" id="IPR015946">
    <property type="entry name" value="KH_dom-like_a/b"/>
</dbReference>
<dbReference type="InterPro" id="IPR000238">
    <property type="entry name" value="RbfA"/>
</dbReference>
<dbReference type="InterPro" id="IPR023799">
    <property type="entry name" value="RbfA_dom_sf"/>
</dbReference>
<dbReference type="InterPro" id="IPR020053">
    <property type="entry name" value="Ribosome-bd_factorA_CS"/>
</dbReference>
<dbReference type="NCBIfam" id="TIGR00082">
    <property type="entry name" value="rbfA"/>
    <property type="match status" value="1"/>
</dbReference>
<dbReference type="PANTHER" id="PTHR33515">
    <property type="entry name" value="RIBOSOME-BINDING FACTOR A, CHLOROPLASTIC-RELATED"/>
    <property type="match status" value="1"/>
</dbReference>
<dbReference type="PANTHER" id="PTHR33515:SF1">
    <property type="entry name" value="RIBOSOME-BINDING FACTOR A, CHLOROPLASTIC-RELATED"/>
    <property type="match status" value="1"/>
</dbReference>
<dbReference type="Pfam" id="PF02033">
    <property type="entry name" value="RBFA"/>
    <property type="match status" value="1"/>
</dbReference>
<dbReference type="SUPFAM" id="SSF89919">
    <property type="entry name" value="Ribosome-binding factor A, RbfA"/>
    <property type="match status" value="1"/>
</dbReference>
<dbReference type="PROSITE" id="PS01319">
    <property type="entry name" value="RBFA"/>
    <property type="match status" value="1"/>
</dbReference>
<reference key="1">
    <citation type="journal article" date="2008" name="J. Bacteriol.">
        <title>Genome sequence of the streptomycin-producing microorganism Streptomyces griseus IFO 13350.</title>
        <authorList>
            <person name="Ohnishi Y."/>
            <person name="Ishikawa J."/>
            <person name="Hara H."/>
            <person name="Suzuki H."/>
            <person name="Ikenoya M."/>
            <person name="Ikeda H."/>
            <person name="Yamashita A."/>
            <person name="Hattori M."/>
            <person name="Horinouchi S."/>
        </authorList>
    </citation>
    <scope>NUCLEOTIDE SEQUENCE [LARGE SCALE GENOMIC DNA]</scope>
    <source>
        <strain>JCM 4626 / CBS 651.72 / NBRC 13350 / KCC S-0626 / ISP 5235</strain>
    </source>
</reference>
<accession>B1VYN3</accession>
<evidence type="ECO:0000255" key="1">
    <source>
        <dbReference type="HAMAP-Rule" id="MF_00003"/>
    </source>
</evidence>
<evidence type="ECO:0000256" key="2">
    <source>
        <dbReference type="SAM" id="MobiDB-lite"/>
    </source>
</evidence>
<protein>
    <recommendedName>
        <fullName evidence="1">Ribosome-binding factor A</fullName>
    </recommendedName>
</protein>
<proteinExistence type="inferred from homology"/>